<organism>
    <name type="scientific">Yersinia pseudotuberculosis serotype O:1b (strain IP 31758)</name>
    <dbReference type="NCBI Taxonomy" id="349747"/>
    <lineage>
        <taxon>Bacteria</taxon>
        <taxon>Pseudomonadati</taxon>
        <taxon>Pseudomonadota</taxon>
        <taxon>Gammaproteobacteria</taxon>
        <taxon>Enterobacterales</taxon>
        <taxon>Yersiniaceae</taxon>
        <taxon>Yersinia</taxon>
    </lineage>
</organism>
<sequence>MALTKAEMSEHLFEKLGLSKRDAKDLVELFFEEVRRALENGEQVKLSGFGNFDLRDKNQRPGRNPKTGEDIPITARRVVTFRPGQKLKSRVESATPKE</sequence>
<proteinExistence type="inferred from homology"/>
<keyword id="KW-0233">DNA recombination</keyword>
<keyword id="KW-0238">DNA-binding</keyword>
<keyword id="KW-0804">Transcription</keyword>
<keyword id="KW-0805">Transcription regulation</keyword>
<keyword id="KW-0810">Translation regulation</keyword>
<protein>
    <recommendedName>
        <fullName evidence="1">Integration host factor subunit alpha</fullName>
        <shortName evidence="1">IHF-alpha</shortName>
    </recommendedName>
</protein>
<feature type="chain" id="PRO_1000060579" description="Integration host factor subunit alpha">
    <location>
        <begin position="1"/>
        <end position="98"/>
    </location>
</feature>
<feature type="region of interest" description="Disordered" evidence="2">
    <location>
        <begin position="49"/>
        <end position="70"/>
    </location>
</feature>
<evidence type="ECO:0000255" key="1">
    <source>
        <dbReference type="HAMAP-Rule" id="MF_00380"/>
    </source>
</evidence>
<evidence type="ECO:0000256" key="2">
    <source>
        <dbReference type="SAM" id="MobiDB-lite"/>
    </source>
</evidence>
<name>IHFA_YERP3</name>
<gene>
    <name evidence="1" type="primary">ihfA</name>
    <name evidence="1" type="synonym">himA</name>
    <name type="ordered locus">YpsIP31758_1718</name>
</gene>
<reference key="1">
    <citation type="journal article" date="2007" name="PLoS Genet.">
        <title>The complete genome sequence of Yersinia pseudotuberculosis IP31758, the causative agent of Far East scarlet-like fever.</title>
        <authorList>
            <person name="Eppinger M."/>
            <person name="Rosovitz M.J."/>
            <person name="Fricke W.F."/>
            <person name="Rasko D.A."/>
            <person name="Kokorina G."/>
            <person name="Fayolle C."/>
            <person name="Lindler L.E."/>
            <person name="Carniel E."/>
            <person name="Ravel J."/>
        </authorList>
    </citation>
    <scope>NUCLEOTIDE SEQUENCE [LARGE SCALE GENOMIC DNA]</scope>
    <source>
        <strain>IP 31758</strain>
    </source>
</reference>
<accession>A7FHG7</accession>
<dbReference type="EMBL" id="CP000720">
    <property type="protein sequence ID" value="ABS47263.1"/>
    <property type="molecule type" value="Genomic_DNA"/>
</dbReference>
<dbReference type="RefSeq" id="WP_002211830.1">
    <property type="nucleotide sequence ID" value="NC_009708.1"/>
</dbReference>
<dbReference type="SMR" id="A7FHG7"/>
<dbReference type="GeneID" id="97456078"/>
<dbReference type="KEGG" id="ypi:YpsIP31758_1718"/>
<dbReference type="HOGENOM" id="CLU_105066_1_3_6"/>
<dbReference type="Proteomes" id="UP000002412">
    <property type="component" value="Chromosome"/>
</dbReference>
<dbReference type="GO" id="GO:0005829">
    <property type="term" value="C:cytosol"/>
    <property type="evidence" value="ECO:0007669"/>
    <property type="project" value="TreeGrafter"/>
</dbReference>
<dbReference type="GO" id="GO:0003677">
    <property type="term" value="F:DNA binding"/>
    <property type="evidence" value="ECO:0007669"/>
    <property type="project" value="UniProtKB-UniRule"/>
</dbReference>
<dbReference type="GO" id="GO:0030527">
    <property type="term" value="F:structural constituent of chromatin"/>
    <property type="evidence" value="ECO:0007669"/>
    <property type="project" value="InterPro"/>
</dbReference>
<dbReference type="GO" id="GO:0006310">
    <property type="term" value="P:DNA recombination"/>
    <property type="evidence" value="ECO:0007669"/>
    <property type="project" value="UniProtKB-UniRule"/>
</dbReference>
<dbReference type="GO" id="GO:0009893">
    <property type="term" value="P:positive regulation of metabolic process"/>
    <property type="evidence" value="ECO:0007669"/>
    <property type="project" value="UniProtKB-ARBA"/>
</dbReference>
<dbReference type="GO" id="GO:0006355">
    <property type="term" value="P:regulation of DNA-templated transcription"/>
    <property type="evidence" value="ECO:0007669"/>
    <property type="project" value="UniProtKB-UniRule"/>
</dbReference>
<dbReference type="GO" id="GO:0006417">
    <property type="term" value="P:regulation of translation"/>
    <property type="evidence" value="ECO:0007669"/>
    <property type="project" value="UniProtKB-UniRule"/>
</dbReference>
<dbReference type="CDD" id="cd13835">
    <property type="entry name" value="IHF_A"/>
    <property type="match status" value="1"/>
</dbReference>
<dbReference type="FunFam" id="4.10.520.10:FF:000002">
    <property type="entry name" value="Integration host factor subunit alpha"/>
    <property type="match status" value="1"/>
</dbReference>
<dbReference type="Gene3D" id="4.10.520.10">
    <property type="entry name" value="IHF-like DNA-binding proteins"/>
    <property type="match status" value="1"/>
</dbReference>
<dbReference type="HAMAP" id="MF_00380">
    <property type="entry name" value="IHF_alpha"/>
    <property type="match status" value="1"/>
</dbReference>
<dbReference type="InterPro" id="IPR000119">
    <property type="entry name" value="Hist_DNA-bd"/>
</dbReference>
<dbReference type="InterPro" id="IPR020816">
    <property type="entry name" value="Histone-like_DNA-bd_CS"/>
</dbReference>
<dbReference type="InterPro" id="IPR010992">
    <property type="entry name" value="IHF-like_DNA-bd_dom_sf"/>
</dbReference>
<dbReference type="InterPro" id="IPR005684">
    <property type="entry name" value="IHF_alpha"/>
</dbReference>
<dbReference type="NCBIfam" id="TIGR00987">
    <property type="entry name" value="himA"/>
    <property type="match status" value="1"/>
</dbReference>
<dbReference type="NCBIfam" id="NF001401">
    <property type="entry name" value="PRK00285.1"/>
    <property type="match status" value="1"/>
</dbReference>
<dbReference type="PANTHER" id="PTHR33175">
    <property type="entry name" value="DNA-BINDING PROTEIN HU"/>
    <property type="match status" value="1"/>
</dbReference>
<dbReference type="PANTHER" id="PTHR33175:SF2">
    <property type="entry name" value="INTEGRATION HOST FACTOR SUBUNIT ALPHA"/>
    <property type="match status" value="1"/>
</dbReference>
<dbReference type="Pfam" id="PF00216">
    <property type="entry name" value="Bac_DNA_binding"/>
    <property type="match status" value="1"/>
</dbReference>
<dbReference type="PRINTS" id="PR01727">
    <property type="entry name" value="DNABINDINGHU"/>
</dbReference>
<dbReference type="SMART" id="SM00411">
    <property type="entry name" value="BHL"/>
    <property type="match status" value="1"/>
</dbReference>
<dbReference type="SUPFAM" id="SSF47729">
    <property type="entry name" value="IHF-like DNA-binding proteins"/>
    <property type="match status" value="1"/>
</dbReference>
<dbReference type="PROSITE" id="PS00045">
    <property type="entry name" value="HISTONE_LIKE"/>
    <property type="match status" value="1"/>
</dbReference>
<comment type="function">
    <text evidence="1">This protein is one of the two subunits of integration host factor, a specific DNA-binding protein that functions in genetic recombination as well as in transcriptional and translational control.</text>
</comment>
<comment type="subunit">
    <text evidence="1">Heterodimer of an alpha and a beta chain.</text>
</comment>
<comment type="similarity">
    <text evidence="1">Belongs to the bacterial histone-like protein family.</text>
</comment>